<accession>Q8W9G4</accession>
<geneLocation type="mitochondrion"/>
<name>NU4M_TACAC</name>
<evidence type="ECO:0000250" key="1"/>
<evidence type="ECO:0000255" key="2"/>
<evidence type="ECO:0000305" key="3"/>
<comment type="function">
    <text evidence="1">Core subunit of the mitochondrial membrane respiratory chain NADH dehydrogenase (Complex I) that is believed to belong to the minimal assembly required for catalysis. Complex I functions in the transfer of electrons from NADH to the respiratory chain. The immediate electron acceptor for the enzyme is believed to be ubiquinone (By similarity).</text>
</comment>
<comment type="catalytic activity">
    <reaction>
        <text>a ubiquinone + NADH + 5 H(+)(in) = a ubiquinol + NAD(+) + 4 H(+)(out)</text>
        <dbReference type="Rhea" id="RHEA:29091"/>
        <dbReference type="Rhea" id="RHEA-COMP:9565"/>
        <dbReference type="Rhea" id="RHEA-COMP:9566"/>
        <dbReference type="ChEBI" id="CHEBI:15378"/>
        <dbReference type="ChEBI" id="CHEBI:16389"/>
        <dbReference type="ChEBI" id="CHEBI:17976"/>
        <dbReference type="ChEBI" id="CHEBI:57540"/>
        <dbReference type="ChEBI" id="CHEBI:57945"/>
        <dbReference type="EC" id="7.1.1.2"/>
    </reaction>
</comment>
<comment type="subcellular location">
    <subcellularLocation>
        <location evidence="1">Mitochondrion membrane</location>
        <topology evidence="1">Multi-pass membrane protein</topology>
    </subcellularLocation>
</comment>
<comment type="similarity">
    <text evidence="3">Belongs to the complex I subunit 4 family.</text>
</comment>
<feature type="chain" id="PRO_0000117992" description="NADH-ubiquinone oxidoreductase chain 4">
    <location>
        <begin position="1"/>
        <end position="459"/>
    </location>
</feature>
<feature type="transmembrane region" description="Helical" evidence="2">
    <location>
        <begin position="22"/>
        <end position="42"/>
    </location>
</feature>
<feature type="transmembrane region" description="Helical" evidence="2">
    <location>
        <begin position="65"/>
        <end position="85"/>
    </location>
</feature>
<feature type="transmembrane region" description="Helical" evidence="2">
    <location>
        <begin position="96"/>
        <end position="116"/>
    </location>
</feature>
<feature type="transmembrane region" description="Helical" evidence="2">
    <location>
        <begin position="117"/>
        <end position="137"/>
    </location>
</feature>
<feature type="transmembrane region" description="Helical" evidence="2">
    <location>
        <begin position="146"/>
        <end position="166"/>
    </location>
</feature>
<feature type="transmembrane region" description="Helical" evidence="2">
    <location>
        <begin position="194"/>
        <end position="214"/>
    </location>
</feature>
<feature type="transmembrane region" description="Helical" evidence="2">
    <location>
        <begin position="230"/>
        <end position="250"/>
    </location>
</feature>
<feature type="transmembrane region" description="Helical" evidence="2">
    <location>
        <begin position="256"/>
        <end position="276"/>
    </location>
</feature>
<feature type="transmembrane region" description="Helical" evidence="2">
    <location>
        <begin position="284"/>
        <end position="303"/>
    </location>
</feature>
<feature type="transmembrane region" description="Helical" evidence="2">
    <location>
        <begin position="308"/>
        <end position="330"/>
    </location>
</feature>
<feature type="transmembrane region" description="Helical" evidence="2">
    <location>
        <begin position="350"/>
        <end position="370"/>
    </location>
</feature>
<feature type="transmembrane region" description="Helical" evidence="2">
    <location>
        <begin position="391"/>
        <end position="411"/>
    </location>
</feature>
<feature type="transmembrane region" description="Helical" evidence="2">
    <location>
        <begin position="435"/>
        <end position="455"/>
    </location>
</feature>
<proteinExistence type="inferred from homology"/>
<protein>
    <recommendedName>
        <fullName>NADH-ubiquinone oxidoreductase chain 4</fullName>
        <ecNumber>7.1.1.2</ecNumber>
    </recommendedName>
    <alternativeName>
        <fullName>NADH dehydrogenase subunit 4</fullName>
    </alternativeName>
</protein>
<sequence>MLKILLPTVMLLPLISFSKKEWMWINSSAYSILISSLSLLTLNQHMDLGLNFNLNFFTDPLSSPLLVLSCWLLPLMILASQFHLMNESTTHKRMYLILLVSLQVALLMAFSAVEFMMYYILFETTLIPTLIIIARWGNQTERLNAGLYFLFYTLLGSLPLLVALIFTQAQMGSLHILLLTLTPNPLLNSWSNDILWLACMMAFLVKMPLYGFHLWLPKAHVEAPIAGSMVLAAILLKLGGYGILRIIIILEPISKLMAYPFIILATWGMIMTSSICLRQTDLKSLIAYSSVSHMGLVVAASLIQTPWGFMGATAMMIAHGLTSTMLFRLANTNYERAHSRTMVLIRGLQMVLPLMSSWWLLASLANLGLPPTINLISELMIIVSAFSWSNLTLILLGLNTVITAIYSLYMLTSVQRGKMTTHSLSINPTFTREHMIMALHLLPLILLTLNPKLILGVAY</sequence>
<dbReference type="EC" id="7.1.1.2"/>
<dbReference type="EMBL" id="AJ303116">
    <property type="protein sequence ID" value="CAC88019.1"/>
    <property type="molecule type" value="Genomic_DNA"/>
</dbReference>
<dbReference type="RefSeq" id="NP_542239.1">
    <property type="nucleotide sequence ID" value="NC_003321.1"/>
</dbReference>
<dbReference type="SMR" id="Q8W9G4"/>
<dbReference type="GeneID" id="804509"/>
<dbReference type="CTD" id="4538"/>
<dbReference type="GO" id="GO:0031966">
    <property type="term" value="C:mitochondrial membrane"/>
    <property type="evidence" value="ECO:0007669"/>
    <property type="project" value="UniProtKB-SubCell"/>
</dbReference>
<dbReference type="GO" id="GO:0008137">
    <property type="term" value="F:NADH dehydrogenase (ubiquinone) activity"/>
    <property type="evidence" value="ECO:0007669"/>
    <property type="project" value="UniProtKB-EC"/>
</dbReference>
<dbReference type="GO" id="GO:0048039">
    <property type="term" value="F:ubiquinone binding"/>
    <property type="evidence" value="ECO:0007669"/>
    <property type="project" value="TreeGrafter"/>
</dbReference>
<dbReference type="GO" id="GO:0042773">
    <property type="term" value="P:ATP synthesis coupled electron transport"/>
    <property type="evidence" value="ECO:0007669"/>
    <property type="project" value="InterPro"/>
</dbReference>
<dbReference type="GO" id="GO:0015990">
    <property type="term" value="P:electron transport coupled proton transport"/>
    <property type="evidence" value="ECO:0007669"/>
    <property type="project" value="TreeGrafter"/>
</dbReference>
<dbReference type="InterPro" id="IPR000260">
    <property type="entry name" value="NADH4_N"/>
</dbReference>
<dbReference type="InterPro" id="IPR010227">
    <property type="entry name" value="NADH_Q_OxRdtase_chainM/4"/>
</dbReference>
<dbReference type="InterPro" id="IPR003918">
    <property type="entry name" value="NADH_UbQ_OxRdtase"/>
</dbReference>
<dbReference type="InterPro" id="IPR001750">
    <property type="entry name" value="ND/Mrp_TM"/>
</dbReference>
<dbReference type="NCBIfam" id="TIGR01972">
    <property type="entry name" value="NDH_I_M"/>
    <property type="match status" value="1"/>
</dbReference>
<dbReference type="PANTHER" id="PTHR43507">
    <property type="entry name" value="NADH-UBIQUINONE OXIDOREDUCTASE CHAIN 4"/>
    <property type="match status" value="1"/>
</dbReference>
<dbReference type="PANTHER" id="PTHR43507:SF20">
    <property type="entry name" value="NADH-UBIQUINONE OXIDOREDUCTASE CHAIN 4"/>
    <property type="match status" value="1"/>
</dbReference>
<dbReference type="Pfam" id="PF01059">
    <property type="entry name" value="Oxidored_q5_N"/>
    <property type="match status" value="1"/>
</dbReference>
<dbReference type="Pfam" id="PF00361">
    <property type="entry name" value="Proton_antipo_M"/>
    <property type="match status" value="1"/>
</dbReference>
<dbReference type="PRINTS" id="PR01437">
    <property type="entry name" value="NUOXDRDTASE4"/>
</dbReference>
<gene>
    <name type="primary">MT-ND4</name>
    <name type="synonym">MTND4</name>
    <name type="synonym">NADH4</name>
    <name type="synonym">ND4</name>
</gene>
<organism>
    <name type="scientific">Tachyglossus aculeatus aculeatus</name>
    <name type="common">Southeast Australian short-beaked echidna</name>
    <dbReference type="NCBI Taxonomy" id="49271"/>
    <lineage>
        <taxon>Eukaryota</taxon>
        <taxon>Metazoa</taxon>
        <taxon>Chordata</taxon>
        <taxon>Craniata</taxon>
        <taxon>Vertebrata</taxon>
        <taxon>Euteleostomi</taxon>
        <taxon>Mammalia</taxon>
        <taxon>Monotremata</taxon>
        <taxon>Tachyglossidae</taxon>
        <taxon>Tachyglossus</taxon>
    </lineage>
</organism>
<keyword id="KW-0249">Electron transport</keyword>
<keyword id="KW-0472">Membrane</keyword>
<keyword id="KW-0496">Mitochondrion</keyword>
<keyword id="KW-0520">NAD</keyword>
<keyword id="KW-0679">Respiratory chain</keyword>
<keyword id="KW-1278">Translocase</keyword>
<keyword id="KW-0812">Transmembrane</keyword>
<keyword id="KW-1133">Transmembrane helix</keyword>
<keyword id="KW-0813">Transport</keyword>
<keyword id="KW-0830">Ubiquinone</keyword>
<reference key="1">
    <citation type="journal article" date="2002" name="J. Mol. Evol.">
        <title>Phylogenetic analysis of 18S rRNA and the mitochondrial genomes of the wombat, Vombatus ursinus, and the spiny anteater, Tachyglossus aculeatus: increased support for the Marsupionta hypothesis.</title>
        <authorList>
            <person name="Janke A."/>
            <person name="Magnell O."/>
            <person name="Wieczorek G."/>
            <person name="Westerman M."/>
            <person name="Arnason U."/>
        </authorList>
    </citation>
    <scope>NUCLEOTIDE SEQUENCE [GENOMIC DNA]</scope>
    <source>
        <tissue>Liver</tissue>
    </source>
</reference>